<protein>
    <recommendedName>
        <fullName>Probable 1-aminocyclopropane-1-carboxylate deaminase</fullName>
        <shortName>ACC deaminase</shortName>
        <shortName>ACCD</shortName>
        <ecNumber>3.5.99.7</ecNumber>
    </recommendedName>
</protein>
<sequence>MSTPAYLTKLESIPKEKFLFGPSPISYLPNLTAVLGGKVKLYAKREDCNSGLAYGGNKVRKLEYLVADAKAKGCNTLVSVGGVQSNHTRAVTAVAVASGLKAVTVQEKWVPIDPPLYSETGNILLSRLMGGDVRLNQETFDIRHKKATEDAFKDVEAKGGKPYYIPAGASDHPLGGLGFTNWVVELAKQEKELGVFFDVVIVCSVTGSSHAGTVVGAVAEGRKRKIIGIDASGKPEATRNQVLKIARNTAALLDERLEIKEEDVILDDRFHAGIYGIPDDETIAAMKLAAQTDAFITDPVYEGKSMAGMIRLVKEGAIKEGSNVLYIHLGGQPALNAYSSYFPHA</sequence>
<reference key="1">
    <citation type="journal article" date="2005" name="Science">
        <title>The genome of the basidiomycetous yeast and human pathogen Cryptococcus neoformans.</title>
        <authorList>
            <person name="Loftus B.J."/>
            <person name="Fung E."/>
            <person name="Roncaglia P."/>
            <person name="Rowley D."/>
            <person name="Amedeo P."/>
            <person name="Bruno D."/>
            <person name="Vamathevan J."/>
            <person name="Miranda M."/>
            <person name="Anderson I.J."/>
            <person name="Fraser J.A."/>
            <person name="Allen J.E."/>
            <person name="Bosdet I.E."/>
            <person name="Brent M.R."/>
            <person name="Chiu R."/>
            <person name="Doering T.L."/>
            <person name="Donlin M.J."/>
            <person name="D'Souza C.A."/>
            <person name="Fox D.S."/>
            <person name="Grinberg V."/>
            <person name="Fu J."/>
            <person name="Fukushima M."/>
            <person name="Haas B.J."/>
            <person name="Huang J.C."/>
            <person name="Janbon G."/>
            <person name="Jones S.J.M."/>
            <person name="Koo H.L."/>
            <person name="Krzywinski M.I."/>
            <person name="Kwon-Chung K.J."/>
            <person name="Lengeler K.B."/>
            <person name="Maiti R."/>
            <person name="Marra M.A."/>
            <person name="Marra R.E."/>
            <person name="Mathewson C.A."/>
            <person name="Mitchell T.G."/>
            <person name="Pertea M."/>
            <person name="Riggs F.R."/>
            <person name="Salzberg S.L."/>
            <person name="Schein J.E."/>
            <person name="Shvartsbeyn A."/>
            <person name="Shin H."/>
            <person name="Shumway M."/>
            <person name="Specht C.A."/>
            <person name="Suh B.B."/>
            <person name="Tenney A."/>
            <person name="Utterback T.R."/>
            <person name="Wickes B.L."/>
            <person name="Wortman J.R."/>
            <person name="Wye N.H."/>
            <person name="Kronstad J.W."/>
            <person name="Lodge J.K."/>
            <person name="Heitman J."/>
            <person name="Davis R.W."/>
            <person name="Fraser C.M."/>
            <person name="Hyman R.W."/>
        </authorList>
    </citation>
    <scope>NUCLEOTIDE SEQUENCE [LARGE SCALE GENOMIC DNA]</scope>
    <source>
        <strain>JEC21 / ATCC MYA-565</strain>
    </source>
</reference>
<evidence type="ECO:0000250" key="1"/>
<evidence type="ECO:0000305" key="2"/>
<comment type="function">
    <text evidence="1">Catalyzes a cyclopropane ring-opening reaction, the irreversible conversion of 1-aminocyclopropane-1-carboxylate (ACC) to ammonia and alpha-ketobutyrate.</text>
</comment>
<comment type="catalytic activity">
    <reaction>
        <text>1-aminocyclopropane-1-carboxylate + H2O = 2-oxobutanoate + NH4(+)</text>
        <dbReference type="Rhea" id="RHEA:16933"/>
        <dbReference type="ChEBI" id="CHEBI:15377"/>
        <dbReference type="ChEBI" id="CHEBI:16763"/>
        <dbReference type="ChEBI" id="CHEBI:28938"/>
        <dbReference type="ChEBI" id="CHEBI:58360"/>
        <dbReference type="EC" id="3.5.99.7"/>
    </reaction>
</comment>
<comment type="cofactor">
    <cofactor evidence="1">
        <name>pyridoxal 5'-phosphate</name>
        <dbReference type="ChEBI" id="CHEBI:597326"/>
    </cofactor>
</comment>
<comment type="similarity">
    <text evidence="2">Belongs to the ACC deaminase/D-cysteine desulfhydrase family.</text>
</comment>
<organism>
    <name type="scientific">Cryptococcus neoformans var. neoformans serotype D (strain JEC21 / ATCC MYA-565)</name>
    <name type="common">Filobasidiella neoformans</name>
    <dbReference type="NCBI Taxonomy" id="214684"/>
    <lineage>
        <taxon>Eukaryota</taxon>
        <taxon>Fungi</taxon>
        <taxon>Dikarya</taxon>
        <taxon>Basidiomycota</taxon>
        <taxon>Agaricomycotina</taxon>
        <taxon>Tremellomycetes</taxon>
        <taxon>Tremellales</taxon>
        <taxon>Cryptococcaceae</taxon>
        <taxon>Cryptococcus</taxon>
        <taxon>Cryptococcus neoformans species complex</taxon>
    </lineage>
</organism>
<dbReference type="EC" id="3.5.99.7"/>
<dbReference type="EMBL" id="AE017342">
    <property type="protein sequence ID" value="AAW41453.1"/>
    <property type="molecule type" value="Genomic_DNA"/>
</dbReference>
<dbReference type="RefSeq" id="XP_568760.1">
    <property type="nucleotide sequence ID" value="XM_568760.1"/>
</dbReference>
<dbReference type="SMR" id="Q5KMX3"/>
<dbReference type="FunCoup" id="Q5KMX3">
    <property type="interactions" value="31"/>
</dbReference>
<dbReference type="STRING" id="214684.Q5KMX3"/>
<dbReference type="PaxDb" id="214684-Q5KMX3"/>
<dbReference type="EnsemblFungi" id="AAW41453">
    <property type="protein sequence ID" value="AAW41453"/>
    <property type="gene ID" value="CNB00190"/>
</dbReference>
<dbReference type="GeneID" id="3255867"/>
<dbReference type="KEGG" id="cne:CNB00190"/>
<dbReference type="VEuPathDB" id="FungiDB:CNB00190"/>
<dbReference type="eggNOG" id="ENOG502QPS1">
    <property type="taxonomic scope" value="Eukaryota"/>
</dbReference>
<dbReference type="HOGENOM" id="CLU_048897_2_1_1"/>
<dbReference type="InParanoid" id="Q5KMX3"/>
<dbReference type="OMA" id="ERYHAGT"/>
<dbReference type="OrthoDB" id="10266364at2759"/>
<dbReference type="Proteomes" id="UP000002149">
    <property type="component" value="Chromosome 2"/>
</dbReference>
<dbReference type="GO" id="GO:0008660">
    <property type="term" value="F:1-aminocyclopropane-1-carboxylate deaminase activity"/>
    <property type="evidence" value="ECO:0007669"/>
    <property type="project" value="UniProtKB-EC"/>
</dbReference>
<dbReference type="GO" id="GO:0019148">
    <property type="term" value="F:D-cysteine desulfhydrase activity"/>
    <property type="evidence" value="ECO:0000318"/>
    <property type="project" value="GO_Central"/>
</dbReference>
<dbReference type="GO" id="GO:0030170">
    <property type="term" value="F:pyridoxal phosphate binding"/>
    <property type="evidence" value="ECO:0007669"/>
    <property type="project" value="InterPro"/>
</dbReference>
<dbReference type="GO" id="GO:0009310">
    <property type="term" value="P:amine catabolic process"/>
    <property type="evidence" value="ECO:0007669"/>
    <property type="project" value="InterPro"/>
</dbReference>
<dbReference type="CDD" id="cd06449">
    <property type="entry name" value="ACCD"/>
    <property type="match status" value="1"/>
</dbReference>
<dbReference type="Gene3D" id="3.40.50.1100">
    <property type="match status" value="2"/>
</dbReference>
<dbReference type="InterPro" id="IPR027278">
    <property type="entry name" value="ACCD_DCysDesulf"/>
</dbReference>
<dbReference type="InterPro" id="IPR005965">
    <property type="entry name" value="ACP_carboxylate_deaminase"/>
</dbReference>
<dbReference type="InterPro" id="IPR001926">
    <property type="entry name" value="TrpB-like_PALP"/>
</dbReference>
<dbReference type="InterPro" id="IPR036052">
    <property type="entry name" value="TrpB-like_PALP_sf"/>
</dbReference>
<dbReference type="NCBIfam" id="TIGR01274">
    <property type="entry name" value="ACC_deam"/>
    <property type="match status" value="1"/>
</dbReference>
<dbReference type="PANTHER" id="PTHR43780">
    <property type="entry name" value="1-AMINOCYCLOPROPANE-1-CARBOXYLATE DEAMINASE-RELATED"/>
    <property type="match status" value="1"/>
</dbReference>
<dbReference type="PANTHER" id="PTHR43780:SF2">
    <property type="entry name" value="1-AMINOCYCLOPROPANE-1-CARBOXYLATE DEAMINASE-RELATED"/>
    <property type="match status" value="1"/>
</dbReference>
<dbReference type="Pfam" id="PF00291">
    <property type="entry name" value="PALP"/>
    <property type="match status" value="1"/>
</dbReference>
<dbReference type="PIRSF" id="PIRSF006278">
    <property type="entry name" value="ACCD_DCysDesulf"/>
    <property type="match status" value="1"/>
</dbReference>
<dbReference type="SUPFAM" id="SSF53686">
    <property type="entry name" value="Tryptophan synthase beta subunit-like PLP-dependent enzymes"/>
    <property type="match status" value="1"/>
</dbReference>
<keyword id="KW-0378">Hydrolase</keyword>
<keyword id="KW-0663">Pyridoxal phosphate</keyword>
<keyword id="KW-1185">Reference proteome</keyword>
<feature type="chain" id="PRO_0000184510" description="Probable 1-aminocyclopropane-1-carboxylate deaminase">
    <location>
        <begin position="1"/>
        <end position="345"/>
    </location>
</feature>
<feature type="active site" description="Nucleophile" evidence="1">
    <location>
        <position position="85"/>
    </location>
</feature>
<feature type="modified residue" description="N6-(pyridoxal phosphate)lysine" evidence="1">
    <location>
        <position position="58"/>
    </location>
</feature>
<accession>Q5KMX3</accession>
<gene>
    <name type="ordered locus">CNB00190</name>
</gene>
<name>1A1D_CRYNJ</name>
<proteinExistence type="inferred from homology"/>